<keyword id="KW-0025">Alternative splicing</keyword>
<keyword id="KW-0903">Direct protein sequencing</keyword>
<keyword id="KW-0249">Electron transport</keyword>
<keyword id="KW-0349">Heme</keyword>
<keyword id="KW-0408">Iron</keyword>
<keyword id="KW-0472">Membrane</keyword>
<keyword id="KW-0479">Metal-binding</keyword>
<keyword id="KW-0496">Mitochondrion</keyword>
<keyword id="KW-0999">Mitochondrion inner membrane</keyword>
<keyword id="KW-1185">Reference proteome</keyword>
<keyword id="KW-0809">Transit peptide</keyword>
<keyword id="KW-0812">Transmembrane</keyword>
<keyword id="KW-1133">Transmembrane helix</keyword>
<keyword id="KW-0813">Transport</keyword>
<keyword id="KW-0816">Tricarboxylic acid cycle</keyword>
<proteinExistence type="evidence at protein level"/>
<feature type="transit peptide" description="Mitochondrion" evidence="4">
    <location>
        <begin position="1"/>
        <end position="105"/>
    </location>
</feature>
<feature type="chain" id="PRO_0000431745" description="Succinate dehydrogenase subunit 3-1, mitochondrial" evidence="4">
    <location>
        <begin position="106"/>
        <end position="213"/>
    </location>
</feature>
<feature type="transmembrane region" description="Helical" evidence="2">
    <location>
        <begin position="148"/>
        <end position="165"/>
    </location>
</feature>
<feature type="binding site" description="axial binding residue" evidence="1">
    <location>
        <position position="130"/>
    </location>
    <ligand>
        <name>heme</name>
        <dbReference type="ChEBI" id="CHEBI:30413"/>
        <note>ligand shared with second transmembrane subunit</note>
    </ligand>
    <ligandPart>
        <name>Fe</name>
        <dbReference type="ChEBI" id="CHEBI:18248"/>
    </ligandPart>
</feature>
<feature type="sequence conflict" description="In Ref. 6; AAM65744." evidence="6" ref="6">
    <original>A</original>
    <variation>G</variation>
    <location>
        <position position="44"/>
    </location>
</feature>
<name>SDH31_ARATH</name>
<reference key="1">
    <citation type="journal article" date="2001" name="Genetics">
        <title>Multiple losses and transfers to the nucleus of two mitochondrial succinate dehydrogenase genes during angiosperm evolution.</title>
        <authorList>
            <person name="Adams K.L."/>
            <person name="Rosenblueth M."/>
            <person name="Qiu Y.L."/>
            <person name="Palmer J.D."/>
        </authorList>
    </citation>
    <scope>NUCLEOTIDE SEQUENCE [GENOMIC DNA]</scope>
</reference>
<reference key="2">
    <citation type="journal article" date="1999" name="DNA Res.">
        <title>Structural analysis of Arabidopsis thaliana chromosome 5. IX. Sequence features of the regions of 1,011,550 bp covered by seventeen P1 and TAC clones.</title>
        <authorList>
            <person name="Kaneko T."/>
            <person name="Katoh T."/>
            <person name="Sato S."/>
            <person name="Nakamura Y."/>
            <person name="Asamizu E."/>
            <person name="Kotani H."/>
            <person name="Miyajima N."/>
            <person name="Tabata S."/>
        </authorList>
    </citation>
    <scope>NUCLEOTIDE SEQUENCE [LARGE SCALE GENOMIC DNA]</scope>
    <source>
        <strain>cv. Columbia</strain>
    </source>
</reference>
<reference key="3">
    <citation type="journal article" date="2000" name="Nature">
        <title>Sequence and analysis of chromosome 5 of the plant Arabidopsis thaliana.</title>
        <authorList>
            <person name="Tabata S."/>
            <person name="Kaneko T."/>
            <person name="Nakamura Y."/>
            <person name="Kotani H."/>
            <person name="Kato T."/>
            <person name="Asamizu E."/>
            <person name="Miyajima N."/>
            <person name="Sasamoto S."/>
            <person name="Kimura T."/>
            <person name="Hosouchi T."/>
            <person name="Kawashima K."/>
            <person name="Kohara M."/>
            <person name="Matsumoto M."/>
            <person name="Matsuno A."/>
            <person name="Muraki A."/>
            <person name="Nakayama S."/>
            <person name="Nakazaki N."/>
            <person name="Naruo K."/>
            <person name="Okumura S."/>
            <person name="Shinpo S."/>
            <person name="Takeuchi C."/>
            <person name="Wada T."/>
            <person name="Watanabe A."/>
            <person name="Yamada M."/>
            <person name="Yasuda M."/>
            <person name="Sato S."/>
            <person name="de la Bastide M."/>
            <person name="Huang E."/>
            <person name="Spiegel L."/>
            <person name="Gnoj L."/>
            <person name="O'Shaughnessy A."/>
            <person name="Preston R."/>
            <person name="Habermann K."/>
            <person name="Murray J."/>
            <person name="Johnson D."/>
            <person name="Rohlfing T."/>
            <person name="Nelson J."/>
            <person name="Stoneking T."/>
            <person name="Pepin K."/>
            <person name="Spieth J."/>
            <person name="Sekhon M."/>
            <person name="Armstrong J."/>
            <person name="Becker M."/>
            <person name="Belter E."/>
            <person name="Cordum H."/>
            <person name="Cordes M."/>
            <person name="Courtney L."/>
            <person name="Courtney W."/>
            <person name="Dante M."/>
            <person name="Du H."/>
            <person name="Edwards J."/>
            <person name="Fryman J."/>
            <person name="Haakensen B."/>
            <person name="Lamar E."/>
            <person name="Latreille P."/>
            <person name="Leonard S."/>
            <person name="Meyer R."/>
            <person name="Mulvaney E."/>
            <person name="Ozersky P."/>
            <person name="Riley A."/>
            <person name="Strowmatt C."/>
            <person name="Wagner-McPherson C."/>
            <person name="Wollam A."/>
            <person name="Yoakum M."/>
            <person name="Bell M."/>
            <person name="Dedhia N."/>
            <person name="Parnell L."/>
            <person name="Shah R."/>
            <person name="Rodriguez M."/>
            <person name="Hoon See L."/>
            <person name="Vil D."/>
            <person name="Baker J."/>
            <person name="Kirchoff K."/>
            <person name="Toth K."/>
            <person name="King L."/>
            <person name="Bahret A."/>
            <person name="Miller B."/>
            <person name="Marra M.A."/>
            <person name="Martienssen R."/>
            <person name="McCombie W.R."/>
            <person name="Wilson R.K."/>
            <person name="Murphy G."/>
            <person name="Bancroft I."/>
            <person name="Volckaert G."/>
            <person name="Wambutt R."/>
            <person name="Duesterhoeft A."/>
            <person name="Stiekema W."/>
            <person name="Pohl T."/>
            <person name="Entian K.-D."/>
            <person name="Terryn N."/>
            <person name="Hartley N."/>
            <person name="Bent E."/>
            <person name="Johnson S."/>
            <person name="Langham S.-A."/>
            <person name="McCullagh B."/>
            <person name="Robben J."/>
            <person name="Grymonprez B."/>
            <person name="Zimmermann W."/>
            <person name="Ramsperger U."/>
            <person name="Wedler H."/>
            <person name="Balke K."/>
            <person name="Wedler E."/>
            <person name="Peters S."/>
            <person name="van Staveren M."/>
            <person name="Dirkse W."/>
            <person name="Mooijman P."/>
            <person name="Klein Lankhorst R."/>
            <person name="Weitzenegger T."/>
            <person name="Bothe G."/>
            <person name="Rose M."/>
            <person name="Hauf J."/>
            <person name="Berneiser S."/>
            <person name="Hempel S."/>
            <person name="Feldpausch M."/>
            <person name="Lamberth S."/>
            <person name="Villarroel R."/>
            <person name="Gielen J."/>
            <person name="Ardiles W."/>
            <person name="Bents O."/>
            <person name="Lemcke K."/>
            <person name="Kolesov G."/>
            <person name="Mayer K.F.X."/>
            <person name="Rudd S."/>
            <person name="Schoof H."/>
            <person name="Schueller C."/>
            <person name="Zaccaria P."/>
            <person name="Mewes H.-W."/>
            <person name="Bevan M."/>
            <person name="Fransz P.F."/>
        </authorList>
    </citation>
    <scope>NUCLEOTIDE SEQUENCE [LARGE SCALE GENOMIC DNA]</scope>
    <source>
        <strain>cv. Columbia</strain>
    </source>
</reference>
<reference key="4">
    <citation type="journal article" date="2017" name="Plant J.">
        <title>Araport11: a complete reannotation of the Arabidopsis thaliana reference genome.</title>
        <authorList>
            <person name="Cheng C.Y."/>
            <person name="Krishnakumar V."/>
            <person name="Chan A.P."/>
            <person name="Thibaud-Nissen F."/>
            <person name="Schobel S."/>
            <person name="Town C.D."/>
        </authorList>
    </citation>
    <scope>GENOME REANNOTATION</scope>
    <source>
        <strain>cv. Columbia</strain>
    </source>
</reference>
<reference key="5">
    <citation type="journal article" date="2003" name="Science">
        <title>Empirical analysis of transcriptional activity in the Arabidopsis genome.</title>
        <authorList>
            <person name="Yamada K."/>
            <person name="Lim J."/>
            <person name="Dale J.M."/>
            <person name="Chen H."/>
            <person name="Shinn P."/>
            <person name="Palm C.J."/>
            <person name="Southwick A.M."/>
            <person name="Wu H.C."/>
            <person name="Kim C.J."/>
            <person name="Nguyen M."/>
            <person name="Pham P.K."/>
            <person name="Cheuk R.F."/>
            <person name="Karlin-Newmann G."/>
            <person name="Liu S.X."/>
            <person name="Lam B."/>
            <person name="Sakano H."/>
            <person name="Wu T."/>
            <person name="Yu G."/>
            <person name="Miranda M."/>
            <person name="Quach H.L."/>
            <person name="Tripp M."/>
            <person name="Chang C.H."/>
            <person name="Lee J.M."/>
            <person name="Toriumi M.J."/>
            <person name="Chan M.M."/>
            <person name="Tang C.C."/>
            <person name="Onodera C.S."/>
            <person name="Deng J.M."/>
            <person name="Akiyama K."/>
            <person name="Ansari Y."/>
            <person name="Arakawa T."/>
            <person name="Banh J."/>
            <person name="Banno F."/>
            <person name="Bowser L."/>
            <person name="Brooks S.Y."/>
            <person name="Carninci P."/>
            <person name="Chao Q."/>
            <person name="Choy N."/>
            <person name="Enju A."/>
            <person name="Goldsmith A.D."/>
            <person name="Gurjal M."/>
            <person name="Hansen N.F."/>
            <person name="Hayashizaki Y."/>
            <person name="Johnson-Hopson C."/>
            <person name="Hsuan V.W."/>
            <person name="Iida K."/>
            <person name="Karnes M."/>
            <person name="Khan S."/>
            <person name="Koesema E."/>
            <person name="Ishida J."/>
            <person name="Jiang P.X."/>
            <person name="Jones T."/>
            <person name="Kawai J."/>
            <person name="Kamiya A."/>
            <person name="Meyers C."/>
            <person name="Nakajima M."/>
            <person name="Narusaka M."/>
            <person name="Seki M."/>
            <person name="Sakurai T."/>
            <person name="Satou M."/>
            <person name="Tamse R."/>
            <person name="Vaysberg M."/>
            <person name="Wallender E.K."/>
            <person name="Wong C."/>
            <person name="Yamamura Y."/>
            <person name="Yuan S."/>
            <person name="Shinozaki K."/>
            <person name="Davis R.W."/>
            <person name="Theologis A."/>
            <person name="Ecker J.R."/>
        </authorList>
    </citation>
    <scope>NUCLEOTIDE SEQUENCE [LARGE SCALE MRNA]</scope>
    <source>
        <strain>cv. Columbia</strain>
    </source>
</reference>
<reference key="6">
    <citation type="submission" date="2002-03" db="EMBL/GenBank/DDBJ databases">
        <title>Full-length cDNA from Arabidopsis thaliana.</title>
        <authorList>
            <person name="Brover V.V."/>
            <person name="Troukhan M.E."/>
            <person name="Alexandrov N.A."/>
            <person name="Lu Y.-P."/>
            <person name="Flavell R.B."/>
            <person name="Feldmann K.A."/>
        </authorList>
    </citation>
    <scope>NUCLEOTIDE SEQUENCE [LARGE SCALE MRNA]</scope>
</reference>
<reference key="7">
    <citation type="journal article" date="2002" name="Plant Mol. Biol.">
        <title>The four subunits of mitochondrial respiratory complex II are encoded by multiple nuclear genes and targeted to mitochondria in Arabidopsis thaliana.</title>
        <authorList>
            <person name="Figueroa P."/>
            <person name="Leon G."/>
            <person name="Elorza A."/>
            <person name="Holuigue L."/>
            <person name="Araya A."/>
            <person name="Jordana X."/>
        </authorList>
    </citation>
    <scope>TISSUE SPECIFICITY</scope>
</reference>
<reference key="8">
    <citation type="journal article" date="2003" name="Plant Physiol.">
        <title>New insights into the respiratory chain of plant mitochondria. Supercomplexes and a unique composition of complex II.</title>
        <authorList>
            <person name="Eubel H."/>
            <person name="Jansch L."/>
            <person name="Braun H.P."/>
        </authorList>
    </citation>
    <scope>PROTEIN SEQUENCE OF 106-119</scope>
    <scope>IDENTIFICATION BY MASS SPECTROMETRY</scope>
</reference>
<reference key="9">
    <citation type="journal article" date="2004" name="Plant Mol. Biol.">
        <title>Mitochondrial cytochrome c oxidase and succinate dehydrogenase complexes contain plant specific subunits.</title>
        <authorList>
            <person name="Millar A.H."/>
            <person name="Eubel H."/>
            <person name="Jansch L."/>
            <person name="Kruft V."/>
            <person name="Heazlewood J.L."/>
            <person name="Braun H.P."/>
        </authorList>
    </citation>
    <scope>IDENTIFICATION BY MASS SPECTROMETRY</scope>
    <scope>SUBUNIT</scope>
</reference>
<evidence type="ECO:0000250" key="1">
    <source>
        <dbReference type="UniProtKB" id="P69054"/>
    </source>
</evidence>
<evidence type="ECO:0000255" key="2"/>
<evidence type="ECO:0000269" key="3">
    <source>
    </source>
</evidence>
<evidence type="ECO:0000269" key="4">
    <source>
    </source>
</evidence>
<evidence type="ECO:0000269" key="5">
    <source>
    </source>
</evidence>
<evidence type="ECO:0000305" key="6"/>
<evidence type="ECO:0000312" key="7">
    <source>
        <dbReference type="Araport" id="AT5G09600"/>
    </source>
</evidence>
<evidence type="ECO:0000312" key="8">
    <source>
        <dbReference type="EMBL" id="BAB17027.1"/>
    </source>
</evidence>
<evidence type="ECO:0000312" key="9">
    <source>
        <dbReference type="EMBL" id="CAB89370.1"/>
    </source>
</evidence>
<organism>
    <name type="scientific">Arabidopsis thaliana</name>
    <name type="common">Mouse-ear cress</name>
    <dbReference type="NCBI Taxonomy" id="3702"/>
    <lineage>
        <taxon>Eukaryota</taxon>
        <taxon>Viridiplantae</taxon>
        <taxon>Streptophyta</taxon>
        <taxon>Embryophyta</taxon>
        <taxon>Tracheophyta</taxon>
        <taxon>Spermatophyta</taxon>
        <taxon>Magnoliopsida</taxon>
        <taxon>eudicotyledons</taxon>
        <taxon>Gunneridae</taxon>
        <taxon>Pentapetalae</taxon>
        <taxon>rosids</taxon>
        <taxon>malvids</taxon>
        <taxon>Brassicales</taxon>
        <taxon>Brassicaceae</taxon>
        <taxon>Camelineae</taxon>
        <taxon>Arabidopsis</taxon>
    </lineage>
</organism>
<sequence>MAATALFRSIRRRDVVSAPLSVYKSLAGNAQPSWGSSYIGQNYASFSRAFGSKPVVNDILGTGLGTNNAIREEREKSKSTEAAIVGAQLTRSFRALDVGTSKRLFSTISGDIKTTQEEPKIKSFRPLSPHLSVYQPQMNSMLSIFNRISGVYLTGVTFAGYLLYLKMGMICLTYPSFYQVLYHTQQQLPVITSVTALAAIYHTIKSTHSLLTH</sequence>
<accession>P0DKI0</accession>
<accession>Q8L9V4</accession>
<accession>Q9FXX8</accession>
<accession>Q9LXC4</accession>
<gene>
    <name evidence="6" type="primary">SDH3-1</name>
    <name evidence="7" type="ordered locus">At5g09600</name>
    <name evidence="9" type="ORF">F17I14.210</name>
    <name evidence="8" type="ORF">MTH16.1</name>
</gene>
<dbReference type="EMBL" id="BK000034">
    <property type="protein sequence ID" value="DAA00014.1"/>
    <property type="molecule type" value="Genomic_DNA"/>
</dbReference>
<dbReference type="EMBL" id="AB020752">
    <property type="protein sequence ID" value="BAB17027.1"/>
    <property type="status" value="ALT_INIT"/>
    <property type="molecule type" value="Genomic_DNA"/>
</dbReference>
<dbReference type="EMBL" id="AL353994">
    <property type="protein sequence ID" value="CAB89370.1"/>
    <property type="molecule type" value="Genomic_DNA"/>
</dbReference>
<dbReference type="EMBL" id="CP002688">
    <property type="protein sequence ID" value="AED91414.1"/>
    <property type="molecule type" value="Genomic_DNA"/>
</dbReference>
<dbReference type="EMBL" id="CP002688">
    <property type="protein sequence ID" value="AED91416.1"/>
    <property type="molecule type" value="Genomic_DNA"/>
</dbReference>
<dbReference type="EMBL" id="AY074861">
    <property type="protein sequence ID" value="AAL75912.1"/>
    <property type="molecule type" value="mRNA"/>
</dbReference>
<dbReference type="EMBL" id="BT010154">
    <property type="protein sequence ID" value="AAQ22623.1"/>
    <property type="molecule type" value="mRNA"/>
</dbReference>
<dbReference type="EMBL" id="AY088202">
    <property type="protein sequence ID" value="AAM65744.1"/>
    <property type="molecule type" value="mRNA"/>
</dbReference>
<dbReference type="PIR" id="T49938">
    <property type="entry name" value="T49938"/>
</dbReference>
<dbReference type="RefSeq" id="NP_001190268.1">
    <molecule id="P0DKI0-1"/>
    <property type="nucleotide sequence ID" value="NM_001203339.2"/>
</dbReference>
<dbReference type="RefSeq" id="NP_194948.2">
    <molecule id="P0DKI0-1"/>
    <property type="nucleotide sequence ID" value="NM_119373.3"/>
</dbReference>
<dbReference type="RefSeq" id="NP_196522.1">
    <molecule id="P0DKI0-1"/>
    <property type="nucleotide sequence ID" value="NM_120997.4"/>
</dbReference>
<dbReference type="SMR" id="P0DKI0"/>
<dbReference type="FunCoup" id="P0DKI0">
    <property type="interactions" value="280"/>
</dbReference>
<dbReference type="STRING" id="3702.P0DKI0"/>
<dbReference type="PaxDb" id="3702-AT4G32210.1"/>
<dbReference type="EnsemblPlants" id="AT4G32210.1">
    <molecule id="P0DKI0-1"/>
    <property type="protein sequence ID" value="AT4G32210.1"/>
    <property type="gene ID" value="AT4G32210"/>
</dbReference>
<dbReference type="EnsemblPlants" id="AT5G09600.1">
    <molecule id="P0DKI0-1"/>
    <property type="protein sequence ID" value="AT5G09600.1"/>
    <property type="gene ID" value="AT5G09600"/>
</dbReference>
<dbReference type="EnsemblPlants" id="AT5G09600.3">
    <molecule id="P0DKI0-1"/>
    <property type="protein sequence ID" value="AT5G09600.3"/>
    <property type="gene ID" value="AT5G09600"/>
</dbReference>
<dbReference type="GeneID" id="830819"/>
<dbReference type="Gramene" id="AT4G32210.1">
    <molecule id="P0DKI0-1"/>
    <property type="protein sequence ID" value="AT4G32210.1"/>
    <property type="gene ID" value="AT4G32210"/>
</dbReference>
<dbReference type="Gramene" id="AT5G09600.1">
    <molecule id="P0DKI0-1"/>
    <property type="protein sequence ID" value="AT5G09600.1"/>
    <property type="gene ID" value="AT5G09600"/>
</dbReference>
<dbReference type="Gramene" id="AT5G09600.3">
    <molecule id="P0DKI0-1"/>
    <property type="protein sequence ID" value="AT5G09600.3"/>
    <property type="gene ID" value="AT5G09600"/>
</dbReference>
<dbReference type="KEGG" id="ath:AT4G32210"/>
<dbReference type="KEGG" id="ath:AT5G09600"/>
<dbReference type="Araport" id="AT5G09600"/>
<dbReference type="TAIR" id="AT5G09600">
    <property type="gene designation" value="SDH3-1"/>
</dbReference>
<dbReference type="eggNOG" id="KOG0102">
    <property type="taxonomic scope" value="Eukaryota"/>
</dbReference>
<dbReference type="eggNOG" id="KOG0449">
    <property type="taxonomic scope" value="Eukaryota"/>
</dbReference>
<dbReference type="HOGENOM" id="CLU_112617_0_0_1"/>
<dbReference type="InParanoid" id="P0DKI0"/>
<dbReference type="OMA" id="CAAVMEG"/>
<dbReference type="OrthoDB" id="588261at2759"/>
<dbReference type="PhylomeDB" id="P0DKI0"/>
<dbReference type="BioCyc" id="ARA:AT4G32210-MONOMER"/>
<dbReference type="BioCyc" id="MetaCyc:AT4G32210-MONOMER"/>
<dbReference type="UniPathway" id="UPA00223"/>
<dbReference type="PRO" id="PR:P0DKI0"/>
<dbReference type="Proteomes" id="UP000006548">
    <property type="component" value="Chromosome 5"/>
</dbReference>
<dbReference type="ExpressionAtlas" id="P0DKI0">
    <property type="expression patterns" value="baseline and differential"/>
</dbReference>
<dbReference type="GO" id="GO:0005743">
    <property type="term" value="C:mitochondrial inner membrane"/>
    <property type="evidence" value="ECO:0007669"/>
    <property type="project" value="UniProtKB-SubCell"/>
</dbReference>
<dbReference type="GO" id="GO:0045273">
    <property type="term" value="C:respiratory chain complex II (succinate dehydrogenase)"/>
    <property type="evidence" value="ECO:0000314"/>
    <property type="project" value="UniProtKB"/>
</dbReference>
<dbReference type="GO" id="GO:0009055">
    <property type="term" value="F:electron transfer activity"/>
    <property type="evidence" value="ECO:0007669"/>
    <property type="project" value="InterPro"/>
</dbReference>
<dbReference type="GO" id="GO:0046872">
    <property type="term" value="F:metal ion binding"/>
    <property type="evidence" value="ECO:0007669"/>
    <property type="project" value="UniProtKB-KW"/>
</dbReference>
<dbReference type="GO" id="GO:0006099">
    <property type="term" value="P:tricarboxylic acid cycle"/>
    <property type="evidence" value="ECO:0007669"/>
    <property type="project" value="UniProtKB-UniPathway"/>
</dbReference>
<dbReference type="CDD" id="cd03499">
    <property type="entry name" value="SQR_TypeC_SdhC"/>
    <property type="match status" value="1"/>
</dbReference>
<dbReference type="FunFam" id="1.20.1300.10:FF:000014">
    <property type="entry name" value="Succinate dehydrogenase subunit 3-1, mitochondrial"/>
    <property type="match status" value="1"/>
</dbReference>
<dbReference type="Gene3D" id="1.20.1300.10">
    <property type="entry name" value="Fumarate reductase/succinate dehydrogenase, transmembrane subunit"/>
    <property type="match status" value="1"/>
</dbReference>
<dbReference type="InterPro" id="IPR034804">
    <property type="entry name" value="SQR/QFR_C/D"/>
</dbReference>
<dbReference type="InterPro" id="IPR014314">
    <property type="entry name" value="Succ_DH_cytb556"/>
</dbReference>
<dbReference type="InterPro" id="IPR000701">
    <property type="entry name" value="SuccDH_FuR_B_TM-su"/>
</dbReference>
<dbReference type="PANTHER" id="PTHR10978">
    <property type="entry name" value="SUCCINATE DEHYDROGENASE CYTOCHROME B560 SUBUNIT"/>
    <property type="match status" value="1"/>
</dbReference>
<dbReference type="PANTHER" id="PTHR10978:SF5">
    <property type="entry name" value="SUCCINATE DEHYDROGENASE CYTOCHROME B560 SUBUNIT, MITOCHONDRIAL"/>
    <property type="match status" value="1"/>
</dbReference>
<dbReference type="Pfam" id="PF01127">
    <property type="entry name" value="Sdh_cyt"/>
    <property type="match status" value="1"/>
</dbReference>
<dbReference type="SUPFAM" id="SSF81343">
    <property type="entry name" value="Fumarate reductase respiratory complex transmembrane subunits"/>
    <property type="match status" value="1"/>
</dbReference>
<protein>
    <recommendedName>
        <fullName evidence="6">Succinate dehydrogenase subunit 3-1, mitochondrial</fullName>
    </recommendedName>
</protein>
<comment type="function">
    <text evidence="1">Membrane-anchoring subunit of succinate dehydrogenase (SDH).</text>
</comment>
<comment type="cofactor">
    <cofactor evidence="1">
        <name>heme</name>
        <dbReference type="ChEBI" id="CHEBI:30413"/>
    </cofactor>
</comment>
<comment type="pathway">
    <text evidence="6">Carbohydrate metabolism; tricarboxylic acid cycle.</text>
</comment>
<comment type="subunit">
    <text evidence="5">Component of complex II composed of eight subunits in plants: four classical SDH subunits SDH1, SDH2, SDH3 and SDH4 (a flavoprotein (FP), an iron-sulfur protein (IP), and a cytochrome b composed of a large and a small subunit.), as well as four subunits unknown in mitochondria from bacteria and heterotrophic eukaryotes.</text>
</comment>
<comment type="subcellular location">
    <subcellularLocation>
        <location evidence="6">Mitochondrion inner membrane</location>
        <topology evidence="2">Single-pass membrane protein</topology>
    </subcellularLocation>
</comment>
<comment type="alternative products">
    <event type="alternative splicing"/>
    <isoform>
        <id>P0DKI0-1</id>
        <name>1</name>
        <sequence type="displayed"/>
    </isoform>
    <text evidence="6">A number of isoforms are produced. According to EST sequences.</text>
</comment>
<comment type="tissue specificity">
    <text evidence="3">Expressed in flowers, inflorescences and stems.</text>
</comment>
<comment type="sequence caution" evidence="6">
    <conflict type="erroneous initiation">
        <sequence resource="EMBL-CDS" id="BAB17027"/>
    </conflict>
    <text>Extended N-terminus.</text>
</comment>